<organism>
    <name type="scientific">Methylobacterium sp. (strain 4-46)</name>
    <dbReference type="NCBI Taxonomy" id="426117"/>
    <lineage>
        <taxon>Bacteria</taxon>
        <taxon>Pseudomonadati</taxon>
        <taxon>Pseudomonadota</taxon>
        <taxon>Alphaproteobacteria</taxon>
        <taxon>Hyphomicrobiales</taxon>
        <taxon>Methylobacteriaceae</taxon>
        <taxon>Methylobacterium</taxon>
    </lineage>
</organism>
<protein>
    <recommendedName>
        <fullName evidence="1">Adenylosuccinate synthetase</fullName>
        <shortName evidence="1">AMPSase</shortName>
        <shortName evidence="1">AdSS</shortName>
        <ecNumber evidence="1">6.3.4.4</ecNumber>
    </recommendedName>
    <alternativeName>
        <fullName evidence="1">IMP--aspartate ligase</fullName>
    </alternativeName>
</protein>
<comment type="function">
    <text evidence="1">Plays an important role in the de novo pathway of purine nucleotide biosynthesis. Catalyzes the first committed step in the biosynthesis of AMP from IMP.</text>
</comment>
<comment type="catalytic activity">
    <reaction evidence="1">
        <text>IMP + L-aspartate + GTP = N(6)-(1,2-dicarboxyethyl)-AMP + GDP + phosphate + 2 H(+)</text>
        <dbReference type="Rhea" id="RHEA:15753"/>
        <dbReference type="ChEBI" id="CHEBI:15378"/>
        <dbReference type="ChEBI" id="CHEBI:29991"/>
        <dbReference type="ChEBI" id="CHEBI:37565"/>
        <dbReference type="ChEBI" id="CHEBI:43474"/>
        <dbReference type="ChEBI" id="CHEBI:57567"/>
        <dbReference type="ChEBI" id="CHEBI:58053"/>
        <dbReference type="ChEBI" id="CHEBI:58189"/>
        <dbReference type="EC" id="6.3.4.4"/>
    </reaction>
</comment>
<comment type="cofactor">
    <cofactor evidence="1">
        <name>Mg(2+)</name>
        <dbReference type="ChEBI" id="CHEBI:18420"/>
    </cofactor>
    <text evidence="1">Binds 1 Mg(2+) ion per subunit.</text>
</comment>
<comment type="pathway">
    <text evidence="1">Purine metabolism; AMP biosynthesis via de novo pathway; AMP from IMP: step 1/2.</text>
</comment>
<comment type="subunit">
    <text evidence="1">Homodimer.</text>
</comment>
<comment type="subcellular location">
    <subcellularLocation>
        <location evidence="1">Cytoplasm</location>
    </subcellularLocation>
</comment>
<comment type="similarity">
    <text evidence="1">Belongs to the adenylosuccinate synthetase family.</text>
</comment>
<accession>B0UJ78</accession>
<keyword id="KW-0963">Cytoplasm</keyword>
<keyword id="KW-0342">GTP-binding</keyword>
<keyword id="KW-0436">Ligase</keyword>
<keyword id="KW-0460">Magnesium</keyword>
<keyword id="KW-0479">Metal-binding</keyword>
<keyword id="KW-0547">Nucleotide-binding</keyword>
<keyword id="KW-0658">Purine biosynthesis</keyword>
<gene>
    <name evidence="1" type="primary">purA</name>
    <name type="ordered locus">M446_6845</name>
</gene>
<feature type="chain" id="PRO_1000089315" description="Adenylosuccinate synthetase">
    <location>
        <begin position="1"/>
        <end position="430"/>
    </location>
</feature>
<feature type="active site" description="Proton acceptor" evidence="1">
    <location>
        <position position="13"/>
    </location>
</feature>
<feature type="active site" description="Proton donor" evidence="1">
    <location>
        <position position="41"/>
    </location>
</feature>
<feature type="binding site" evidence="1">
    <location>
        <begin position="12"/>
        <end position="18"/>
    </location>
    <ligand>
        <name>GTP</name>
        <dbReference type="ChEBI" id="CHEBI:37565"/>
    </ligand>
</feature>
<feature type="binding site" description="in other chain" evidence="1">
    <location>
        <begin position="13"/>
        <end position="16"/>
    </location>
    <ligand>
        <name>IMP</name>
        <dbReference type="ChEBI" id="CHEBI:58053"/>
        <note>ligand shared between dimeric partners</note>
    </ligand>
</feature>
<feature type="binding site" evidence="1">
    <location>
        <position position="13"/>
    </location>
    <ligand>
        <name>Mg(2+)</name>
        <dbReference type="ChEBI" id="CHEBI:18420"/>
    </ligand>
</feature>
<feature type="binding site" description="in other chain" evidence="1">
    <location>
        <begin position="38"/>
        <end position="41"/>
    </location>
    <ligand>
        <name>IMP</name>
        <dbReference type="ChEBI" id="CHEBI:58053"/>
        <note>ligand shared between dimeric partners</note>
    </ligand>
</feature>
<feature type="binding site" evidence="1">
    <location>
        <begin position="40"/>
        <end position="42"/>
    </location>
    <ligand>
        <name>GTP</name>
        <dbReference type="ChEBI" id="CHEBI:37565"/>
    </ligand>
</feature>
<feature type="binding site" evidence="1">
    <location>
        <position position="40"/>
    </location>
    <ligand>
        <name>Mg(2+)</name>
        <dbReference type="ChEBI" id="CHEBI:18420"/>
    </ligand>
</feature>
<feature type="binding site" description="in other chain" evidence="1">
    <location>
        <position position="130"/>
    </location>
    <ligand>
        <name>IMP</name>
        <dbReference type="ChEBI" id="CHEBI:58053"/>
        <note>ligand shared between dimeric partners</note>
    </ligand>
</feature>
<feature type="binding site" evidence="1">
    <location>
        <position position="144"/>
    </location>
    <ligand>
        <name>IMP</name>
        <dbReference type="ChEBI" id="CHEBI:58053"/>
        <note>ligand shared between dimeric partners</note>
    </ligand>
</feature>
<feature type="binding site" description="in other chain" evidence="1">
    <location>
        <position position="224"/>
    </location>
    <ligand>
        <name>IMP</name>
        <dbReference type="ChEBI" id="CHEBI:58053"/>
        <note>ligand shared between dimeric partners</note>
    </ligand>
</feature>
<feature type="binding site" description="in other chain" evidence="1">
    <location>
        <position position="239"/>
    </location>
    <ligand>
        <name>IMP</name>
        <dbReference type="ChEBI" id="CHEBI:58053"/>
        <note>ligand shared between dimeric partners</note>
    </ligand>
</feature>
<feature type="binding site" evidence="1">
    <location>
        <begin position="299"/>
        <end position="305"/>
    </location>
    <ligand>
        <name>substrate</name>
    </ligand>
</feature>
<feature type="binding site" description="in other chain" evidence="1">
    <location>
        <position position="303"/>
    </location>
    <ligand>
        <name>IMP</name>
        <dbReference type="ChEBI" id="CHEBI:58053"/>
        <note>ligand shared between dimeric partners</note>
    </ligand>
</feature>
<feature type="binding site" evidence="1">
    <location>
        <position position="305"/>
    </location>
    <ligand>
        <name>GTP</name>
        <dbReference type="ChEBI" id="CHEBI:37565"/>
    </ligand>
</feature>
<feature type="binding site" evidence="1">
    <location>
        <begin position="331"/>
        <end position="333"/>
    </location>
    <ligand>
        <name>GTP</name>
        <dbReference type="ChEBI" id="CHEBI:37565"/>
    </ligand>
</feature>
<feature type="binding site" evidence="1">
    <location>
        <begin position="413"/>
        <end position="415"/>
    </location>
    <ligand>
        <name>GTP</name>
        <dbReference type="ChEBI" id="CHEBI:37565"/>
    </ligand>
</feature>
<sequence>MANVVVVGAQWGDEGKGKIVDWLAEQADVVVRFQGGHNAGHTLVIDGVTYKLSLLPSGVVRGGTLSVIGNGVVVDPWHLVDEIARIGTQGVSITPETLRIADNATLILPLHRELDHFRETANATLKIGTTKRGIGPAYEDKVGRRAIRVVDLADEALLGAKIERLLAHHNALRRGLGIEEVDGAALKAELLAIAPKILPYADTVWVLLDEARRGGQRILFEGAQGALLDVDHGTYPYVTSSNIVAAQAATGSGLGPSAIGYVLGIVKAYTTRVGEGPFPTELTDAIGEKIGERGREFGVVTGRKRRCGWFDAALVRQTVRTSGIDGIALTKLDILDGFETIKICTGYRLDGRLIDHLPASQADQARVEPVYETIDGWFETTAGARSWAELPAQAIKYVRRIEELIGATVALLSTSPERDDTILVHNPFED</sequence>
<evidence type="ECO:0000255" key="1">
    <source>
        <dbReference type="HAMAP-Rule" id="MF_00011"/>
    </source>
</evidence>
<dbReference type="EC" id="6.3.4.4" evidence="1"/>
<dbReference type="EMBL" id="CP000943">
    <property type="protein sequence ID" value="ACA21090.1"/>
    <property type="molecule type" value="Genomic_DNA"/>
</dbReference>
<dbReference type="RefSeq" id="WP_012336464.1">
    <property type="nucleotide sequence ID" value="NC_010511.1"/>
</dbReference>
<dbReference type="SMR" id="B0UJ78"/>
<dbReference type="STRING" id="426117.M446_6845"/>
<dbReference type="KEGG" id="met:M446_6845"/>
<dbReference type="eggNOG" id="COG0104">
    <property type="taxonomic scope" value="Bacteria"/>
</dbReference>
<dbReference type="HOGENOM" id="CLU_029848_0_0_5"/>
<dbReference type="UniPathway" id="UPA00075">
    <property type="reaction ID" value="UER00335"/>
</dbReference>
<dbReference type="GO" id="GO:0005737">
    <property type="term" value="C:cytoplasm"/>
    <property type="evidence" value="ECO:0007669"/>
    <property type="project" value="UniProtKB-SubCell"/>
</dbReference>
<dbReference type="GO" id="GO:0004019">
    <property type="term" value="F:adenylosuccinate synthase activity"/>
    <property type="evidence" value="ECO:0007669"/>
    <property type="project" value="UniProtKB-UniRule"/>
</dbReference>
<dbReference type="GO" id="GO:0005525">
    <property type="term" value="F:GTP binding"/>
    <property type="evidence" value="ECO:0007669"/>
    <property type="project" value="UniProtKB-UniRule"/>
</dbReference>
<dbReference type="GO" id="GO:0000287">
    <property type="term" value="F:magnesium ion binding"/>
    <property type="evidence" value="ECO:0007669"/>
    <property type="project" value="UniProtKB-UniRule"/>
</dbReference>
<dbReference type="GO" id="GO:0044208">
    <property type="term" value="P:'de novo' AMP biosynthetic process"/>
    <property type="evidence" value="ECO:0007669"/>
    <property type="project" value="UniProtKB-UniRule"/>
</dbReference>
<dbReference type="GO" id="GO:0046040">
    <property type="term" value="P:IMP metabolic process"/>
    <property type="evidence" value="ECO:0007669"/>
    <property type="project" value="TreeGrafter"/>
</dbReference>
<dbReference type="CDD" id="cd03108">
    <property type="entry name" value="AdSS"/>
    <property type="match status" value="1"/>
</dbReference>
<dbReference type="FunFam" id="1.10.300.10:FF:000001">
    <property type="entry name" value="Adenylosuccinate synthetase"/>
    <property type="match status" value="1"/>
</dbReference>
<dbReference type="FunFam" id="3.90.170.10:FF:000001">
    <property type="entry name" value="Adenylosuccinate synthetase"/>
    <property type="match status" value="1"/>
</dbReference>
<dbReference type="Gene3D" id="3.40.440.10">
    <property type="entry name" value="Adenylosuccinate Synthetase, subunit A, domain 1"/>
    <property type="match status" value="1"/>
</dbReference>
<dbReference type="Gene3D" id="1.10.300.10">
    <property type="entry name" value="Adenylosuccinate Synthetase, subunit A, domain 2"/>
    <property type="match status" value="1"/>
</dbReference>
<dbReference type="Gene3D" id="3.90.170.10">
    <property type="entry name" value="Adenylosuccinate Synthetase, subunit A, domain 3"/>
    <property type="match status" value="1"/>
</dbReference>
<dbReference type="HAMAP" id="MF_00011">
    <property type="entry name" value="Adenylosucc_synth"/>
    <property type="match status" value="1"/>
</dbReference>
<dbReference type="InterPro" id="IPR018220">
    <property type="entry name" value="Adenylosuccin_syn_GTP-bd"/>
</dbReference>
<dbReference type="InterPro" id="IPR033128">
    <property type="entry name" value="Adenylosuccin_syn_Lys_AS"/>
</dbReference>
<dbReference type="InterPro" id="IPR042109">
    <property type="entry name" value="Adenylosuccinate_synth_dom1"/>
</dbReference>
<dbReference type="InterPro" id="IPR042110">
    <property type="entry name" value="Adenylosuccinate_synth_dom2"/>
</dbReference>
<dbReference type="InterPro" id="IPR042111">
    <property type="entry name" value="Adenylosuccinate_synth_dom3"/>
</dbReference>
<dbReference type="InterPro" id="IPR001114">
    <property type="entry name" value="Adenylosuccinate_synthetase"/>
</dbReference>
<dbReference type="InterPro" id="IPR027417">
    <property type="entry name" value="P-loop_NTPase"/>
</dbReference>
<dbReference type="NCBIfam" id="NF002223">
    <property type="entry name" value="PRK01117.1"/>
    <property type="match status" value="1"/>
</dbReference>
<dbReference type="NCBIfam" id="TIGR00184">
    <property type="entry name" value="purA"/>
    <property type="match status" value="1"/>
</dbReference>
<dbReference type="PANTHER" id="PTHR11846">
    <property type="entry name" value="ADENYLOSUCCINATE SYNTHETASE"/>
    <property type="match status" value="1"/>
</dbReference>
<dbReference type="PANTHER" id="PTHR11846:SF0">
    <property type="entry name" value="ADENYLOSUCCINATE SYNTHETASE"/>
    <property type="match status" value="1"/>
</dbReference>
<dbReference type="Pfam" id="PF00709">
    <property type="entry name" value="Adenylsucc_synt"/>
    <property type="match status" value="1"/>
</dbReference>
<dbReference type="SMART" id="SM00788">
    <property type="entry name" value="Adenylsucc_synt"/>
    <property type="match status" value="1"/>
</dbReference>
<dbReference type="SUPFAM" id="SSF52540">
    <property type="entry name" value="P-loop containing nucleoside triphosphate hydrolases"/>
    <property type="match status" value="1"/>
</dbReference>
<dbReference type="PROSITE" id="PS01266">
    <property type="entry name" value="ADENYLOSUCCIN_SYN_1"/>
    <property type="match status" value="1"/>
</dbReference>
<dbReference type="PROSITE" id="PS00513">
    <property type="entry name" value="ADENYLOSUCCIN_SYN_2"/>
    <property type="match status" value="1"/>
</dbReference>
<proteinExistence type="inferred from homology"/>
<name>PURA_METS4</name>
<reference key="1">
    <citation type="submission" date="2008-02" db="EMBL/GenBank/DDBJ databases">
        <title>Complete sequence of chromosome of Methylobacterium sp. 4-46.</title>
        <authorList>
            <consortium name="US DOE Joint Genome Institute"/>
            <person name="Copeland A."/>
            <person name="Lucas S."/>
            <person name="Lapidus A."/>
            <person name="Glavina del Rio T."/>
            <person name="Dalin E."/>
            <person name="Tice H."/>
            <person name="Bruce D."/>
            <person name="Goodwin L."/>
            <person name="Pitluck S."/>
            <person name="Chertkov O."/>
            <person name="Brettin T."/>
            <person name="Detter J.C."/>
            <person name="Han C."/>
            <person name="Kuske C.R."/>
            <person name="Schmutz J."/>
            <person name="Larimer F."/>
            <person name="Land M."/>
            <person name="Hauser L."/>
            <person name="Kyrpides N."/>
            <person name="Ivanova N."/>
            <person name="Marx C.J."/>
            <person name="Richardson P."/>
        </authorList>
    </citation>
    <scope>NUCLEOTIDE SEQUENCE [LARGE SCALE GENOMIC DNA]</scope>
    <source>
        <strain>4-46</strain>
    </source>
</reference>